<feature type="chain" id="PRO_1000070807" description="Cytochrome c-type biogenesis protein CcmE">
    <location>
        <begin position="1"/>
        <end position="165"/>
    </location>
</feature>
<feature type="topological domain" description="Cytoplasmic" evidence="1">
    <location>
        <begin position="1"/>
        <end position="29"/>
    </location>
</feature>
<feature type="transmembrane region" description="Helical; Signal-anchor for type II membrane protein" evidence="1">
    <location>
        <begin position="30"/>
        <end position="50"/>
    </location>
</feature>
<feature type="topological domain" description="Periplasmic" evidence="1">
    <location>
        <begin position="51"/>
        <end position="165"/>
    </location>
</feature>
<feature type="binding site" description="covalent" evidence="1">
    <location>
        <position position="143"/>
    </location>
    <ligand>
        <name>heme</name>
        <dbReference type="ChEBI" id="CHEBI:30413"/>
    </ligand>
</feature>
<feature type="binding site" description="axial binding residue" evidence="1">
    <location>
        <position position="147"/>
    </location>
    <ligand>
        <name>heme</name>
        <dbReference type="ChEBI" id="CHEBI:30413"/>
    </ligand>
    <ligandPart>
        <name>Fe</name>
        <dbReference type="ChEBI" id="CHEBI:18248"/>
    </ligandPart>
</feature>
<protein>
    <recommendedName>
        <fullName evidence="1">Cytochrome c-type biogenesis protein CcmE</fullName>
    </recommendedName>
    <alternativeName>
        <fullName evidence="1">Cytochrome c maturation protein E</fullName>
    </alternativeName>
    <alternativeName>
        <fullName evidence="1">Heme chaperone CcmE</fullName>
    </alternativeName>
</protein>
<reference key="1">
    <citation type="journal article" date="2009" name="PLoS ONE">
        <title>Genome degradation in Brucella ovis corresponds with narrowing of its host range and tissue tropism.</title>
        <authorList>
            <person name="Tsolis R.M."/>
            <person name="Seshadri R."/>
            <person name="Santos R.L."/>
            <person name="Sangari F.J."/>
            <person name="Lobo J.M."/>
            <person name="de Jong M.F."/>
            <person name="Ren Q."/>
            <person name="Myers G."/>
            <person name="Brinkac L.M."/>
            <person name="Nelson W.C."/>
            <person name="Deboy R.T."/>
            <person name="Angiuoli S."/>
            <person name="Khouri H."/>
            <person name="Dimitrov G."/>
            <person name="Robinson J.R."/>
            <person name="Mulligan S."/>
            <person name="Walker R.L."/>
            <person name="Elzer P.E."/>
            <person name="Hassan K.A."/>
            <person name="Paulsen I.T."/>
        </authorList>
    </citation>
    <scope>NUCLEOTIDE SEQUENCE [LARGE SCALE GENOMIC DNA]</scope>
    <source>
        <strain>ATCC 25840 / 63/290 / NCTC 10512</strain>
    </source>
</reference>
<proteinExistence type="inferred from homology"/>
<accession>A5VPF4</accession>
<evidence type="ECO:0000255" key="1">
    <source>
        <dbReference type="HAMAP-Rule" id="MF_01959"/>
    </source>
</evidence>
<dbReference type="EMBL" id="CP000708">
    <property type="protein sequence ID" value="ABQ60102.1"/>
    <property type="molecule type" value="Genomic_DNA"/>
</dbReference>
<dbReference type="RefSeq" id="WP_002963757.1">
    <property type="nucleotide sequence ID" value="NC_009505.1"/>
</dbReference>
<dbReference type="SMR" id="A5VPF4"/>
<dbReference type="GeneID" id="97534052"/>
<dbReference type="KEGG" id="bov:BOV_0607"/>
<dbReference type="HOGENOM" id="CLU_079503_1_1_5"/>
<dbReference type="PhylomeDB" id="A5VPF4"/>
<dbReference type="Proteomes" id="UP000006383">
    <property type="component" value="Chromosome I"/>
</dbReference>
<dbReference type="GO" id="GO:0005886">
    <property type="term" value="C:plasma membrane"/>
    <property type="evidence" value="ECO:0007669"/>
    <property type="project" value="UniProtKB-SubCell"/>
</dbReference>
<dbReference type="GO" id="GO:0020037">
    <property type="term" value="F:heme binding"/>
    <property type="evidence" value="ECO:0007669"/>
    <property type="project" value="InterPro"/>
</dbReference>
<dbReference type="GO" id="GO:0046872">
    <property type="term" value="F:metal ion binding"/>
    <property type="evidence" value="ECO:0007669"/>
    <property type="project" value="UniProtKB-KW"/>
</dbReference>
<dbReference type="GO" id="GO:0017004">
    <property type="term" value="P:cytochrome complex assembly"/>
    <property type="evidence" value="ECO:0007669"/>
    <property type="project" value="UniProtKB-KW"/>
</dbReference>
<dbReference type="Gene3D" id="2.40.50.140">
    <property type="entry name" value="Nucleic acid-binding proteins"/>
    <property type="match status" value="1"/>
</dbReference>
<dbReference type="HAMAP" id="MF_01959">
    <property type="entry name" value="CcmE"/>
    <property type="match status" value="1"/>
</dbReference>
<dbReference type="InterPro" id="IPR004329">
    <property type="entry name" value="CcmE"/>
</dbReference>
<dbReference type="InterPro" id="IPR036127">
    <property type="entry name" value="CcmE-like_sf"/>
</dbReference>
<dbReference type="InterPro" id="IPR012340">
    <property type="entry name" value="NA-bd_OB-fold"/>
</dbReference>
<dbReference type="NCBIfam" id="NF009727">
    <property type="entry name" value="PRK13254.1-1"/>
    <property type="match status" value="1"/>
</dbReference>
<dbReference type="NCBIfam" id="NF009730">
    <property type="entry name" value="PRK13254.1-4"/>
    <property type="match status" value="1"/>
</dbReference>
<dbReference type="NCBIfam" id="NF009731">
    <property type="entry name" value="PRK13254.1-5"/>
    <property type="match status" value="1"/>
</dbReference>
<dbReference type="PANTHER" id="PTHR34128">
    <property type="entry name" value="CYTOCHROME C-TYPE BIOGENESIS PROTEIN CCME HOMOLOG, MITOCHONDRIAL"/>
    <property type="match status" value="1"/>
</dbReference>
<dbReference type="PANTHER" id="PTHR34128:SF2">
    <property type="entry name" value="CYTOCHROME C-TYPE BIOGENESIS PROTEIN CCME HOMOLOG, MITOCHONDRIAL"/>
    <property type="match status" value="1"/>
</dbReference>
<dbReference type="Pfam" id="PF03100">
    <property type="entry name" value="CcmE"/>
    <property type="match status" value="1"/>
</dbReference>
<dbReference type="SUPFAM" id="SSF82093">
    <property type="entry name" value="Heme chaperone CcmE"/>
    <property type="match status" value="1"/>
</dbReference>
<comment type="function">
    <text evidence="1">Heme chaperone required for the biogenesis of c-type cytochromes. Transiently binds heme delivered by CcmC and transfers the heme to apo-cytochromes in a process facilitated by CcmF and CcmH.</text>
</comment>
<comment type="subcellular location">
    <subcellularLocation>
        <location evidence="1">Cell inner membrane</location>
        <topology evidence="1">Single-pass type II membrane protein</topology>
        <orientation evidence="1">Periplasmic side</orientation>
    </subcellularLocation>
</comment>
<comment type="similarity">
    <text evidence="1">Belongs to the CcmE/CycJ family.</text>
</comment>
<keyword id="KW-0997">Cell inner membrane</keyword>
<keyword id="KW-1003">Cell membrane</keyword>
<keyword id="KW-0201">Cytochrome c-type biogenesis</keyword>
<keyword id="KW-0349">Heme</keyword>
<keyword id="KW-0408">Iron</keyword>
<keyword id="KW-0472">Membrane</keyword>
<keyword id="KW-0479">Metal-binding</keyword>
<keyword id="KW-0735">Signal-anchor</keyword>
<keyword id="KW-0812">Transmembrane</keyword>
<keyword id="KW-1133">Transmembrane helix</keyword>
<name>CCME_BRUO2</name>
<organism>
    <name type="scientific">Brucella ovis (strain ATCC 25840 / 63/290 / NCTC 10512)</name>
    <dbReference type="NCBI Taxonomy" id="444178"/>
    <lineage>
        <taxon>Bacteria</taxon>
        <taxon>Pseudomonadati</taxon>
        <taxon>Pseudomonadota</taxon>
        <taxon>Alphaproteobacteria</taxon>
        <taxon>Hyphomicrobiales</taxon>
        <taxon>Brucellaceae</taxon>
        <taxon>Brucella/Ochrobactrum group</taxon>
        <taxon>Brucella</taxon>
    </lineage>
</organism>
<sequence length="165" mass="17977">MSATAEQNARNPKGKGGFARTVSQRKRKRLFLIGGALAVLAVAVGLMLTAFNQDIRFFRTPADLTEQDMTSGARFRLGGLVEEGSVSRTGSELRFTVTDTIKTVKVVFEGIPPDLFREGQGVVAEGRFGSDGLFRADNVLAKHDENYVPKDLADSLKKKGVWEGK</sequence>
<gene>
    <name evidence="1" type="primary">ccmE</name>
    <name evidence="1" type="synonym">cycJ</name>
    <name type="ordered locus">BOV_0607</name>
</gene>